<organism>
    <name type="scientific">Arabidopsis thaliana</name>
    <name type="common">Mouse-ear cress</name>
    <dbReference type="NCBI Taxonomy" id="3702"/>
    <lineage>
        <taxon>Eukaryota</taxon>
        <taxon>Viridiplantae</taxon>
        <taxon>Streptophyta</taxon>
        <taxon>Embryophyta</taxon>
        <taxon>Tracheophyta</taxon>
        <taxon>Spermatophyta</taxon>
        <taxon>Magnoliopsida</taxon>
        <taxon>eudicotyledons</taxon>
        <taxon>Gunneridae</taxon>
        <taxon>Pentapetalae</taxon>
        <taxon>rosids</taxon>
        <taxon>malvids</taxon>
        <taxon>Brassicales</taxon>
        <taxon>Brassicaceae</taxon>
        <taxon>Camelineae</taxon>
        <taxon>Arabidopsis</taxon>
    </lineage>
</organism>
<keyword id="KW-0325">Glycoprotein</keyword>
<keyword id="KW-1185">Reference proteome</keyword>
<keyword id="KW-0964">Secreted</keyword>
<keyword id="KW-0732">Signal</keyword>
<protein>
    <recommendedName>
        <fullName>Dirigent protein 21</fullName>
        <shortName>AtDIR21</shortName>
    </recommendedName>
</protein>
<name>DIR21_ARATH</name>
<feature type="signal peptide" evidence="2">
    <location>
        <begin position="1"/>
        <end position="19"/>
    </location>
</feature>
<feature type="chain" id="PRO_0000422852" description="Dirigent protein 21">
    <location>
        <begin position="20"/>
        <end position="189"/>
    </location>
</feature>
<feature type="glycosylation site" description="N-linked (GlcNAc...) asparagine" evidence="2">
    <location>
        <position position="72"/>
    </location>
</feature>
<feature type="glycosylation site" description="N-linked (GlcNAc...) asparagine" evidence="2">
    <location>
        <position position="173"/>
    </location>
</feature>
<comment type="function">
    <text evidence="1">Dirigent proteins impart stereoselectivity on the phenoxy radical-coupling reaction, yielding optically active lignans from two molecules of coniferyl alcohol in the biosynthesis of lignans, flavonolignans, and alkaloids and thus plays a central role in plant secondary metabolism.</text>
</comment>
<comment type="subunit">
    <text evidence="1">Homodimer.</text>
</comment>
<comment type="subcellular location">
    <subcellularLocation>
        <location evidence="3">Secreted</location>
    </subcellularLocation>
</comment>
<comment type="similarity">
    <text evidence="3">Belongs to the plant dirigent protein family.</text>
</comment>
<accession>Q9SS03</accession>
<sequence length="189" mass="20396">MASLYLLLLLPLFLALILAATITESKSFSTTVKAPYPGHKPDKLTHLHFYFHDIVSGDKPTSVQVANGPTTNSSATGFGLVAVVDDKLTVGPEITSEEVGRAQGMYASADQNKLGLLMAFNLVFTKGKFSDSTVAMYGRNPVLSKVREMPIIGGTGAFRFGRGYALAKTLVFNITSGDAVVEYNVYIWH</sequence>
<reference key="1">
    <citation type="journal article" date="2000" name="Nature">
        <title>Sequence and analysis of chromosome 1 of the plant Arabidopsis thaliana.</title>
        <authorList>
            <person name="Theologis A."/>
            <person name="Ecker J.R."/>
            <person name="Palm C.J."/>
            <person name="Federspiel N.A."/>
            <person name="Kaul S."/>
            <person name="White O."/>
            <person name="Alonso J."/>
            <person name="Altafi H."/>
            <person name="Araujo R."/>
            <person name="Bowman C.L."/>
            <person name="Brooks S.Y."/>
            <person name="Buehler E."/>
            <person name="Chan A."/>
            <person name="Chao Q."/>
            <person name="Chen H."/>
            <person name="Cheuk R.F."/>
            <person name="Chin C.W."/>
            <person name="Chung M.K."/>
            <person name="Conn L."/>
            <person name="Conway A.B."/>
            <person name="Conway A.R."/>
            <person name="Creasy T.H."/>
            <person name="Dewar K."/>
            <person name="Dunn P."/>
            <person name="Etgu P."/>
            <person name="Feldblyum T.V."/>
            <person name="Feng J.-D."/>
            <person name="Fong B."/>
            <person name="Fujii C.Y."/>
            <person name="Gill J.E."/>
            <person name="Goldsmith A.D."/>
            <person name="Haas B."/>
            <person name="Hansen N.F."/>
            <person name="Hughes B."/>
            <person name="Huizar L."/>
            <person name="Hunter J.L."/>
            <person name="Jenkins J."/>
            <person name="Johnson-Hopson C."/>
            <person name="Khan S."/>
            <person name="Khaykin E."/>
            <person name="Kim C.J."/>
            <person name="Koo H.L."/>
            <person name="Kremenetskaia I."/>
            <person name="Kurtz D.B."/>
            <person name="Kwan A."/>
            <person name="Lam B."/>
            <person name="Langin-Hooper S."/>
            <person name="Lee A."/>
            <person name="Lee J.M."/>
            <person name="Lenz C.A."/>
            <person name="Li J.H."/>
            <person name="Li Y.-P."/>
            <person name="Lin X."/>
            <person name="Liu S.X."/>
            <person name="Liu Z.A."/>
            <person name="Luros J.S."/>
            <person name="Maiti R."/>
            <person name="Marziali A."/>
            <person name="Militscher J."/>
            <person name="Miranda M."/>
            <person name="Nguyen M."/>
            <person name="Nierman W.C."/>
            <person name="Osborne B.I."/>
            <person name="Pai G."/>
            <person name="Peterson J."/>
            <person name="Pham P.K."/>
            <person name="Rizzo M."/>
            <person name="Rooney T."/>
            <person name="Rowley D."/>
            <person name="Sakano H."/>
            <person name="Salzberg S.L."/>
            <person name="Schwartz J.R."/>
            <person name="Shinn P."/>
            <person name="Southwick A.M."/>
            <person name="Sun H."/>
            <person name="Tallon L.J."/>
            <person name="Tambunga G."/>
            <person name="Toriumi M.J."/>
            <person name="Town C.D."/>
            <person name="Utterback T."/>
            <person name="Van Aken S."/>
            <person name="Vaysberg M."/>
            <person name="Vysotskaia V.S."/>
            <person name="Walker M."/>
            <person name="Wu D."/>
            <person name="Yu G."/>
            <person name="Fraser C.M."/>
            <person name="Venter J.C."/>
            <person name="Davis R.W."/>
        </authorList>
    </citation>
    <scope>NUCLEOTIDE SEQUENCE [LARGE SCALE GENOMIC DNA]</scope>
    <source>
        <strain>cv. Columbia</strain>
    </source>
</reference>
<reference key="2">
    <citation type="journal article" date="2017" name="Plant J.">
        <title>Araport11: a complete reannotation of the Arabidopsis thaliana reference genome.</title>
        <authorList>
            <person name="Cheng C.Y."/>
            <person name="Krishnakumar V."/>
            <person name="Chan A.P."/>
            <person name="Thibaud-Nissen F."/>
            <person name="Schobel S."/>
            <person name="Town C.D."/>
        </authorList>
    </citation>
    <scope>GENOME REANNOTATION</scope>
    <source>
        <strain>cv. Columbia</strain>
    </source>
</reference>
<reference key="3">
    <citation type="journal article" date="2007" name="Phytochemistry">
        <title>Dirigent proteins in conifer defense II: Extended gene discovery, phylogeny, and constitutive and stress-induced gene expression in spruce (Picea spp.).</title>
        <authorList>
            <person name="Ralph S.G."/>
            <person name="Jancsik S."/>
            <person name="Bohlmann J."/>
        </authorList>
    </citation>
    <scope>GENE FAMILY</scope>
    <scope>NOMENCLATURE</scope>
</reference>
<dbReference type="EMBL" id="AC009513">
    <property type="protein sequence ID" value="AAF06047.1"/>
    <property type="molecule type" value="Genomic_DNA"/>
</dbReference>
<dbReference type="EMBL" id="CP002684">
    <property type="protein sequence ID" value="AEE34435.1"/>
    <property type="molecule type" value="Genomic_DNA"/>
</dbReference>
<dbReference type="PIR" id="G96682">
    <property type="entry name" value="G96682"/>
</dbReference>
<dbReference type="RefSeq" id="NP_176762.1">
    <property type="nucleotide sequence ID" value="NM_105259.2"/>
</dbReference>
<dbReference type="SMR" id="Q9SS03"/>
<dbReference type="FunCoup" id="Q9SS03">
    <property type="interactions" value="27"/>
</dbReference>
<dbReference type="STRING" id="3702.Q9SS03"/>
<dbReference type="GlyCosmos" id="Q9SS03">
    <property type="glycosylation" value="2 sites, No reported glycans"/>
</dbReference>
<dbReference type="GlyGen" id="Q9SS03">
    <property type="glycosylation" value="2 sites"/>
</dbReference>
<dbReference type="PaxDb" id="3702-AT1G65870.1"/>
<dbReference type="ProteomicsDB" id="222214"/>
<dbReference type="EnsemblPlants" id="AT1G65870.1">
    <property type="protein sequence ID" value="AT1G65870.1"/>
    <property type="gene ID" value="AT1G65870"/>
</dbReference>
<dbReference type="GeneID" id="842898"/>
<dbReference type="Gramene" id="AT1G65870.1">
    <property type="protein sequence ID" value="AT1G65870.1"/>
    <property type="gene ID" value="AT1G65870"/>
</dbReference>
<dbReference type="KEGG" id="ath:AT1G65870"/>
<dbReference type="Araport" id="AT1G65870"/>
<dbReference type="TAIR" id="AT1G65870"/>
<dbReference type="HOGENOM" id="CLU_087111_2_1_1"/>
<dbReference type="InParanoid" id="Q9SS03"/>
<dbReference type="OMA" id="ARTHSWE"/>
<dbReference type="OrthoDB" id="1864232at2759"/>
<dbReference type="PhylomeDB" id="Q9SS03"/>
<dbReference type="PRO" id="PR:Q9SS03"/>
<dbReference type="Proteomes" id="UP000006548">
    <property type="component" value="Chromosome 1"/>
</dbReference>
<dbReference type="ExpressionAtlas" id="Q9SS03">
    <property type="expression patterns" value="baseline and differential"/>
</dbReference>
<dbReference type="GO" id="GO:0005576">
    <property type="term" value="C:extracellular region"/>
    <property type="evidence" value="ECO:0007669"/>
    <property type="project" value="UniProtKB-SubCell"/>
</dbReference>
<dbReference type="GO" id="GO:0009699">
    <property type="term" value="P:phenylpropanoid biosynthetic process"/>
    <property type="evidence" value="ECO:0007669"/>
    <property type="project" value="UniProtKB-ARBA"/>
</dbReference>
<dbReference type="Gene3D" id="2.40.480.10">
    <property type="entry name" value="Allene oxide cyclase-like"/>
    <property type="match status" value="1"/>
</dbReference>
<dbReference type="InterPro" id="IPR044859">
    <property type="entry name" value="Allene_oxi_cyc_Dirigent"/>
</dbReference>
<dbReference type="InterPro" id="IPR004265">
    <property type="entry name" value="Dirigent"/>
</dbReference>
<dbReference type="PANTHER" id="PTHR21495">
    <property type="entry name" value="NUCLEOPORIN-RELATED"/>
    <property type="match status" value="1"/>
</dbReference>
<dbReference type="Pfam" id="PF03018">
    <property type="entry name" value="Dirigent"/>
    <property type="match status" value="1"/>
</dbReference>
<proteinExistence type="inferred from homology"/>
<gene>
    <name type="primary">DIR21</name>
    <name type="ordered locus">At1g65870</name>
    <name type="ORF">F12P19.3</name>
</gene>
<evidence type="ECO:0000250" key="1"/>
<evidence type="ECO:0000255" key="2"/>
<evidence type="ECO:0000305" key="3"/>